<accession>Q21HI3</accession>
<proteinExistence type="inferred from homology"/>
<protein>
    <recommendedName>
        <fullName evidence="1">3-hydroxyacyl-[acyl-carrier-protein] dehydratase FabZ</fullName>
        <ecNumber evidence="1">4.2.1.59</ecNumber>
    </recommendedName>
    <alternativeName>
        <fullName evidence="1">(3R)-hydroxymyristoyl-[acyl-carrier-protein] dehydratase</fullName>
        <shortName evidence="1">(3R)-hydroxymyristoyl-ACP dehydrase</shortName>
    </alternativeName>
    <alternativeName>
        <fullName evidence="1">Beta-hydroxyacyl-ACP dehydratase</fullName>
    </alternativeName>
</protein>
<organism>
    <name type="scientific">Saccharophagus degradans (strain 2-40 / ATCC 43961 / DSM 17024)</name>
    <dbReference type="NCBI Taxonomy" id="203122"/>
    <lineage>
        <taxon>Bacteria</taxon>
        <taxon>Pseudomonadati</taxon>
        <taxon>Pseudomonadota</taxon>
        <taxon>Gammaproteobacteria</taxon>
        <taxon>Cellvibrionales</taxon>
        <taxon>Cellvibrionaceae</taxon>
        <taxon>Saccharophagus</taxon>
    </lineage>
</organism>
<comment type="function">
    <text evidence="1">Involved in unsaturated fatty acids biosynthesis. Catalyzes the dehydration of short chain beta-hydroxyacyl-ACPs and long chain saturated and unsaturated beta-hydroxyacyl-ACPs.</text>
</comment>
<comment type="catalytic activity">
    <reaction evidence="1">
        <text>a (3R)-hydroxyacyl-[ACP] = a (2E)-enoyl-[ACP] + H2O</text>
        <dbReference type="Rhea" id="RHEA:13097"/>
        <dbReference type="Rhea" id="RHEA-COMP:9925"/>
        <dbReference type="Rhea" id="RHEA-COMP:9945"/>
        <dbReference type="ChEBI" id="CHEBI:15377"/>
        <dbReference type="ChEBI" id="CHEBI:78784"/>
        <dbReference type="ChEBI" id="CHEBI:78827"/>
        <dbReference type="EC" id="4.2.1.59"/>
    </reaction>
</comment>
<comment type="subcellular location">
    <subcellularLocation>
        <location evidence="1">Cytoplasm</location>
    </subcellularLocation>
</comment>
<comment type="similarity">
    <text evidence="1">Belongs to the thioester dehydratase family. FabZ subfamily.</text>
</comment>
<name>FABZ_SACD2</name>
<keyword id="KW-0963">Cytoplasm</keyword>
<keyword id="KW-0441">Lipid A biosynthesis</keyword>
<keyword id="KW-0444">Lipid biosynthesis</keyword>
<keyword id="KW-0443">Lipid metabolism</keyword>
<keyword id="KW-0456">Lyase</keyword>
<keyword id="KW-1185">Reference proteome</keyword>
<feature type="chain" id="PRO_0000242900" description="3-hydroxyacyl-[acyl-carrier-protein] dehydratase FabZ">
    <location>
        <begin position="1"/>
        <end position="145"/>
    </location>
</feature>
<feature type="active site" evidence="1">
    <location>
        <position position="48"/>
    </location>
</feature>
<gene>
    <name evidence="1" type="primary">fabZ</name>
    <name type="ordered locus">Sde_2586</name>
</gene>
<reference key="1">
    <citation type="journal article" date="2008" name="PLoS Genet.">
        <title>Complete genome sequence of the complex carbohydrate-degrading marine bacterium, Saccharophagus degradans strain 2-40 T.</title>
        <authorList>
            <person name="Weiner R.M."/>
            <person name="Taylor L.E. II"/>
            <person name="Henrissat B."/>
            <person name="Hauser L."/>
            <person name="Land M."/>
            <person name="Coutinho P.M."/>
            <person name="Rancurel C."/>
            <person name="Saunders E.H."/>
            <person name="Longmire A.G."/>
            <person name="Zhang H."/>
            <person name="Bayer E.A."/>
            <person name="Gilbert H.J."/>
            <person name="Larimer F."/>
            <person name="Zhulin I.B."/>
            <person name="Ekborg N.A."/>
            <person name="Lamed R."/>
            <person name="Richardson P.M."/>
            <person name="Borovok I."/>
            <person name="Hutcheson S."/>
        </authorList>
    </citation>
    <scope>NUCLEOTIDE SEQUENCE [LARGE SCALE GENOMIC DNA]</scope>
    <source>
        <strain>2-40 / ATCC 43961 / DSM 17024</strain>
    </source>
</reference>
<dbReference type="EC" id="4.2.1.59" evidence="1"/>
<dbReference type="EMBL" id="CP000282">
    <property type="protein sequence ID" value="ABD81846.1"/>
    <property type="molecule type" value="Genomic_DNA"/>
</dbReference>
<dbReference type="RefSeq" id="WP_011469063.1">
    <property type="nucleotide sequence ID" value="NC_007912.1"/>
</dbReference>
<dbReference type="SMR" id="Q21HI3"/>
<dbReference type="STRING" id="203122.Sde_2586"/>
<dbReference type="GeneID" id="98614249"/>
<dbReference type="KEGG" id="sde:Sde_2586"/>
<dbReference type="eggNOG" id="COG0764">
    <property type="taxonomic scope" value="Bacteria"/>
</dbReference>
<dbReference type="HOGENOM" id="CLU_078912_1_2_6"/>
<dbReference type="OrthoDB" id="9772788at2"/>
<dbReference type="Proteomes" id="UP000001947">
    <property type="component" value="Chromosome"/>
</dbReference>
<dbReference type="GO" id="GO:0005737">
    <property type="term" value="C:cytoplasm"/>
    <property type="evidence" value="ECO:0007669"/>
    <property type="project" value="UniProtKB-SubCell"/>
</dbReference>
<dbReference type="GO" id="GO:0016020">
    <property type="term" value="C:membrane"/>
    <property type="evidence" value="ECO:0007669"/>
    <property type="project" value="GOC"/>
</dbReference>
<dbReference type="GO" id="GO:0019171">
    <property type="term" value="F:(3R)-hydroxyacyl-[acyl-carrier-protein] dehydratase activity"/>
    <property type="evidence" value="ECO:0007669"/>
    <property type="project" value="UniProtKB-EC"/>
</dbReference>
<dbReference type="GO" id="GO:0006633">
    <property type="term" value="P:fatty acid biosynthetic process"/>
    <property type="evidence" value="ECO:0007669"/>
    <property type="project" value="UniProtKB-UniRule"/>
</dbReference>
<dbReference type="GO" id="GO:0009245">
    <property type="term" value="P:lipid A biosynthetic process"/>
    <property type="evidence" value="ECO:0007669"/>
    <property type="project" value="UniProtKB-UniRule"/>
</dbReference>
<dbReference type="CDD" id="cd01288">
    <property type="entry name" value="FabZ"/>
    <property type="match status" value="1"/>
</dbReference>
<dbReference type="FunFam" id="3.10.129.10:FF:000001">
    <property type="entry name" value="3-hydroxyacyl-[acyl-carrier-protein] dehydratase FabZ"/>
    <property type="match status" value="1"/>
</dbReference>
<dbReference type="Gene3D" id="3.10.129.10">
    <property type="entry name" value="Hotdog Thioesterase"/>
    <property type="match status" value="1"/>
</dbReference>
<dbReference type="HAMAP" id="MF_00406">
    <property type="entry name" value="FabZ"/>
    <property type="match status" value="1"/>
</dbReference>
<dbReference type="InterPro" id="IPR013114">
    <property type="entry name" value="FabA_FabZ"/>
</dbReference>
<dbReference type="InterPro" id="IPR010084">
    <property type="entry name" value="FabZ"/>
</dbReference>
<dbReference type="InterPro" id="IPR029069">
    <property type="entry name" value="HotDog_dom_sf"/>
</dbReference>
<dbReference type="NCBIfam" id="TIGR01750">
    <property type="entry name" value="fabZ"/>
    <property type="match status" value="1"/>
</dbReference>
<dbReference type="NCBIfam" id="NF000582">
    <property type="entry name" value="PRK00006.1"/>
    <property type="match status" value="1"/>
</dbReference>
<dbReference type="PANTHER" id="PTHR30272">
    <property type="entry name" value="3-HYDROXYACYL-[ACYL-CARRIER-PROTEIN] DEHYDRATASE"/>
    <property type="match status" value="1"/>
</dbReference>
<dbReference type="PANTHER" id="PTHR30272:SF1">
    <property type="entry name" value="3-HYDROXYACYL-[ACYL-CARRIER-PROTEIN] DEHYDRATASE"/>
    <property type="match status" value="1"/>
</dbReference>
<dbReference type="Pfam" id="PF07977">
    <property type="entry name" value="FabA"/>
    <property type="match status" value="1"/>
</dbReference>
<dbReference type="SUPFAM" id="SSF54637">
    <property type="entry name" value="Thioesterase/thiol ester dehydrase-isomerase"/>
    <property type="match status" value="1"/>
</dbReference>
<evidence type="ECO:0000255" key="1">
    <source>
        <dbReference type="HAMAP-Rule" id="MF_00406"/>
    </source>
</evidence>
<sequence>MMDSVQIRKYLPHRYPFLLIDRVVELVEGDYILAYKNITINEEVFQGHFPNYPVFPGVMLIEAMAQACGVLGFKTMDKTPDDGSIYLFAGIDNVRFKRQVIPGDRVFFNCKKISDKRGIWKFECVATVDDQLVTSATIMCADRSI</sequence>